<evidence type="ECO:0000250" key="1">
    <source>
        <dbReference type="UniProtKB" id="P0C5X2"/>
    </source>
</evidence>
<evidence type="ECO:0000255" key="2"/>
<evidence type="ECO:0000269" key="3">
    <source>
    </source>
</evidence>
<evidence type="ECO:0000303" key="4">
    <source>
    </source>
</evidence>
<evidence type="ECO:0000305" key="5"/>
<keyword id="KW-0878">Amphibian defense peptide</keyword>
<keyword id="KW-0044">Antibiotic</keyword>
<keyword id="KW-0929">Antimicrobial</keyword>
<keyword id="KW-0903">Direct protein sequencing</keyword>
<keyword id="KW-1015">Disulfide bond</keyword>
<keyword id="KW-0964">Secreted</keyword>
<sequence length="29" mass="2951">GLMSTLKGAATNVAVTLLNKLQCKLTGTC</sequence>
<protein>
    <recommendedName>
        <fullName evidence="4">Brevinin-2Rc</fullName>
    </recommendedName>
</protein>
<feature type="peptide" id="PRO_0000361065" description="Brevinin-2Rc" evidence="3">
    <location>
        <begin position="1"/>
        <end position="29"/>
    </location>
</feature>
<feature type="disulfide bond" evidence="3">
    <location>
        <begin position="23"/>
        <end position="29"/>
    </location>
</feature>
<proteinExistence type="evidence at protein level"/>
<name>BR2C_PELRI</name>
<dbReference type="GO" id="GO:0005576">
    <property type="term" value="C:extracellular region"/>
    <property type="evidence" value="ECO:0000314"/>
    <property type="project" value="UniProtKB"/>
</dbReference>
<dbReference type="GO" id="GO:0042742">
    <property type="term" value="P:defense response to bacterium"/>
    <property type="evidence" value="ECO:0007669"/>
    <property type="project" value="UniProtKB-KW"/>
</dbReference>
<dbReference type="InterPro" id="IPR012521">
    <property type="entry name" value="Antimicrobial_frog_2"/>
</dbReference>
<dbReference type="Pfam" id="PF08023">
    <property type="entry name" value="Antimicrobial_2"/>
    <property type="match status" value="1"/>
</dbReference>
<organism>
    <name type="scientific">Pelophylax ridibundus</name>
    <name type="common">Marsh frog</name>
    <name type="synonym">Rana ridibunda</name>
    <dbReference type="NCBI Taxonomy" id="8406"/>
    <lineage>
        <taxon>Eukaryota</taxon>
        <taxon>Metazoa</taxon>
        <taxon>Chordata</taxon>
        <taxon>Craniata</taxon>
        <taxon>Vertebrata</taxon>
        <taxon>Euteleostomi</taxon>
        <taxon>Amphibia</taxon>
        <taxon>Batrachia</taxon>
        <taxon>Anura</taxon>
        <taxon>Neobatrachia</taxon>
        <taxon>Ranoidea</taxon>
        <taxon>Ranidae</taxon>
        <taxon>Pelophylax</taxon>
    </lineage>
</organism>
<accession>P86024</accession>
<reference evidence="5" key="1">
    <citation type="journal article" date="2008" name="Rapid Commun. Mass Spectrom.">
        <title>De novo sequencing of peptides secreted by the skin glands of the caucasian green frog Rana ridibunda.</title>
        <authorList>
            <person name="Samgina T.Y."/>
            <person name="Artemenko K.A."/>
            <person name="Gorshkov V.A."/>
            <person name="Ogourtsov S.V."/>
            <person name="Zubarev R.A."/>
            <person name="Lebedev A.T."/>
        </authorList>
    </citation>
    <scope>PROTEIN SEQUENCE</scope>
    <scope>MASS SPECTROMETRY</scope>
    <scope>DISULFIDE BOND</scope>
    <source>
        <tissue evidence="3">Skin secretion</tissue>
    </source>
</reference>
<comment type="function">
    <text evidence="1">Antimicrobial peptide.</text>
</comment>
<comment type="subcellular location">
    <subcellularLocation>
        <location evidence="5">Secreted</location>
    </subcellularLocation>
</comment>
<comment type="tissue specificity">
    <text evidence="5">Expressed by the skin glands.</text>
</comment>
<comment type="mass spectrometry" mass="2947.0" method="Electrospray" evidence="3"/>
<comment type="similarity">
    <text evidence="2">Belongs to the frog skin active peptide (FSAP) family. Brevinin subfamily.</text>
</comment>